<dbReference type="EMBL" id="DQ336132">
    <property type="protein sequence ID" value="ABC61883.1"/>
    <property type="molecule type" value="mRNA"/>
</dbReference>
<dbReference type="RefSeq" id="NP_001036093.1">
    <property type="nucleotide sequence ID" value="NM_001042628.1"/>
</dbReference>
<dbReference type="FunCoup" id="Q0ZNK1">
    <property type="interactions" value="6"/>
</dbReference>
<dbReference type="STRING" id="9598.ENSPTRP00000068505"/>
<dbReference type="PaxDb" id="9598-ENSPTRP00000049988"/>
<dbReference type="Ensembl" id="ENSPTRT00000087160.1">
    <property type="protein sequence ID" value="ENSPTRP00000068505.1"/>
    <property type="gene ID" value="ENSPTRG00000049779.1"/>
</dbReference>
<dbReference type="GeneID" id="732487"/>
<dbReference type="KEGG" id="ptr:732487"/>
<dbReference type="CTD" id="139067"/>
<dbReference type="eggNOG" id="ENOG502SCZ0">
    <property type="taxonomic scope" value="Eukaryota"/>
</dbReference>
<dbReference type="GeneTree" id="ENSGT00940000163956"/>
<dbReference type="InParanoid" id="Q0ZNK1"/>
<dbReference type="OMA" id="DEMQEVP"/>
<dbReference type="OrthoDB" id="15789at9604"/>
<dbReference type="Proteomes" id="UP000002277">
    <property type="component" value="Chromosome X"/>
</dbReference>
<dbReference type="Bgee" id="ENSPTRG00000049779">
    <property type="expression patterns" value="Expressed in testis and 1 other cell type or tissue"/>
</dbReference>
<dbReference type="InterPro" id="IPR010007">
    <property type="entry name" value="SPAN-X_fam"/>
</dbReference>
<dbReference type="Pfam" id="PF07458">
    <property type="entry name" value="SPAN-X"/>
    <property type="match status" value="1"/>
</dbReference>
<name>SPXN3_PANTR</name>
<organism>
    <name type="scientific">Pan troglodytes</name>
    <name type="common">Chimpanzee</name>
    <dbReference type="NCBI Taxonomy" id="9598"/>
    <lineage>
        <taxon>Eukaryota</taxon>
        <taxon>Metazoa</taxon>
        <taxon>Chordata</taxon>
        <taxon>Craniata</taxon>
        <taxon>Vertebrata</taxon>
        <taxon>Euteleostomi</taxon>
        <taxon>Mammalia</taxon>
        <taxon>Eutheria</taxon>
        <taxon>Euarchontoglires</taxon>
        <taxon>Primates</taxon>
        <taxon>Haplorrhini</taxon>
        <taxon>Catarrhini</taxon>
        <taxon>Hominidae</taxon>
        <taxon>Pan</taxon>
    </lineage>
</organism>
<comment type="similarity">
    <text evidence="2">Belongs to the SPAN-X family.</text>
</comment>
<evidence type="ECO:0000256" key="1">
    <source>
        <dbReference type="SAM" id="MobiDB-lite"/>
    </source>
</evidence>
<evidence type="ECO:0000305" key="2"/>
<sequence>MEQPTSSTNGEKTKSPCKSNSENDEMQEVPNRVLAPEQSLKKTKTSEYPIIFVYYRRKGKKINSNQLENDQSQENSINPVQKEEDEGLGLSEGSSNEDEDLGPSEGPSKEDKDLDSSEGSSQENEDLGLSEGSSQDSGED</sequence>
<gene>
    <name type="primary">SPANXN3</name>
</gene>
<accession>Q0ZNK1</accession>
<reference key="1">
    <citation type="submission" date="2005-12" db="EMBL/GenBank/DDBJ databases">
        <title>Cancer/testis-associated SPANX-N genes: expression, polymorphism, evolution and implication to the prostate cancer susceptibility.</title>
        <authorList>
            <person name="Kouprina N."/>
            <person name="Schoppee P.D."/>
            <person name="Pavlicek A."/>
            <person name="Collins N.K."/>
            <person name="Westbrook A.V."/>
            <person name="Solomon G."/>
            <person name="Otstot J."/>
            <person name="Goldsmith P."/>
            <person name="Gunsior M."/>
            <person name="Hewitt S.M."/>
            <person name="Takikita M."/>
            <person name="Risinger J.I."/>
            <person name="Isaacs W."/>
            <person name="Jurka J."/>
            <person name="Herr J.C."/>
            <person name="Larionov V."/>
        </authorList>
    </citation>
    <scope>NUCLEOTIDE SEQUENCE [MRNA]</scope>
</reference>
<feature type="chain" id="PRO_0000285694" description="Sperm protein associated with the nucleus on the X chromosome N3">
    <location>
        <begin position="1"/>
        <end position="140"/>
    </location>
</feature>
<feature type="region of interest" description="Disordered" evidence="1">
    <location>
        <begin position="1"/>
        <end position="140"/>
    </location>
</feature>
<feature type="compositionally biased region" description="Polar residues" evidence="1">
    <location>
        <begin position="1"/>
        <end position="20"/>
    </location>
</feature>
<feature type="compositionally biased region" description="Polar residues" evidence="1">
    <location>
        <begin position="62"/>
        <end position="79"/>
    </location>
</feature>
<feature type="compositionally biased region" description="Polar residues" evidence="1">
    <location>
        <begin position="131"/>
        <end position="140"/>
    </location>
</feature>
<protein>
    <recommendedName>
        <fullName>Sperm protein associated with the nucleus on the X chromosome N3</fullName>
    </recommendedName>
    <alternativeName>
        <fullName>Nuclear-associated protein SPAN-Xn3</fullName>
        <shortName>SPANX-N3</shortName>
    </alternativeName>
    <alternativeName>
        <fullName>SPANX family member N3</fullName>
    </alternativeName>
</protein>
<proteinExistence type="evidence at transcript level"/>
<keyword id="KW-1185">Reference proteome</keyword>